<keyword id="KW-0067">ATP-binding</keyword>
<keyword id="KW-0436">Ligase</keyword>
<keyword id="KW-0460">Magnesium</keyword>
<keyword id="KW-0479">Metal-binding</keyword>
<keyword id="KW-0547">Nucleotide-binding</keyword>
<keyword id="KW-1185">Reference proteome</keyword>
<keyword id="KW-0816">Tricarboxylic acid cycle</keyword>
<organism>
    <name type="scientific">Paracoccus denitrificans (strain Pd 1222)</name>
    <dbReference type="NCBI Taxonomy" id="318586"/>
    <lineage>
        <taxon>Bacteria</taxon>
        <taxon>Pseudomonadati</taxon>
        <taxon>Pseudomonadota</taxon>
        <taxon>Alphaproteobacteria</taxon>
        <taxon>Rhodobacterales</taxon>
        <taxon>Paracoccaceae</taxon>
        <taxon>Paracoccus</taxon>
    </lineage>
</organism>
<gene>
    <name evidence="1" type="primary">sucC</name>
    <name type="ordered locus">Pden_0559</name>
</gene>
<sequence length="397" mass="42587">MNIHEYQAKALLRQYGAPVSDGRVVMKADEAKAAAGELDGPLWVVKAQIHAGGRGKGHFKEKEAGEKGGVRLAKSVEEAEELARQMLGRTLVTHQTGETGKQVNRIYIEDGSDIERELYLALLVDRGTSRVSFVASTEGGMDIEEVAASTPEKIVSFSVDPASGLSDFHGRRVAFALGLSGAQVKQCVALVKNLYRMFIEKDMEMLEINPLIVMKDGNLKALDAKMGFDNNALYRQPDILALRDETEEDPKELAASKFDLNYIALDGEIGCMVNGAGLAMATMDIIKLFGAEPANFLDVGGGATKEKVTEAFKIITSDPNVKGILVNIFGGIMRCDIIAEGIIAAVKEVGLQVPLVVRLEGTNVELGKQIIGESGLNVIAADDLSDAAQKIVKAVKG</sequence>
<accession>A1AZH7</accession>
<name>SUCC_PARDP</name>
<proteinExistence type="inferred from homology"/>
<comment type="function">
    <text evidence="1">Succinyl-CoA synthetase functions in the citric acid cycle (TCA), coupling the hydrolysis of succinyl-CoA to the synthesis of either ATP or GTP and thus represents the only step of substrate-level phosphorylation in the TCA. The beta subunit provides nucleotide specificity of the enzyme and binds the substrate succinate, while the binding sites for coenzyme A and phosphate are found in the alpha subunit.</text>
</comment>
<comment type="catalytic activity">
    <reaction evidence="1">
        <text>succinate + ATP + CoA = succinyl-CoA + ADP + phosphate</text>
        <dbReference type="Rhea" id="RHEA:17661"/>
        <dbReference type="ChEBI" id="CHEBI:30031"/>
        <dbReference type="ChEBI" id="CHEBI:30616"/>
        <dbReference type="ChEBI" id="CHEBI:43474"/>
        <dbReference type="ChEBI" id="CHEBI:57287"/>
        <dbReference type="ChEBI" id="CHEBI:57292"/>
        <dbReference type="ChEBI" id="CHEBI:456216"/>
        <dbReference type="EC" id="6.2.1.5"/>
    </reaction>
    <physiologicalReaction direction="right-to-left" evidence="1">
        <dbReference type="Rhea" id="RHEA:17663"/>
    </physiologicalReaction>
</comment>
<comment type="catalytic activity">
    <reaction evidence="1">
        <text>GTP + succinate + CoA = succinyl-CoA + GDP + phosphate</text>
        <dbReference type="Rhea" id="RHEA:22120"/>
        <dbReference type="ChEBI" id="CHEBI:30031"/>
        <dbReference type="ChEBI" id="CHEBI:37565"/>
        <dbReference type="ChEBI" id="CHEBI:43474"/>
        <dbReference type="ChEBI" id="CHEBI:57287"/>
        <dbReference type="ChEBI" id="CHEBI:57292"/>
        <dbReference type="ChEBI" id="CHEBI:58189"/>
    </reaction>
    <physiologicalReaction direction="right-to-left" evidence="1">
        <dbReference type="Rhea" id="RHEA:22122"/>
    </physiologicalReaction>
</comment>
<comment type="cofactor">
    <cofactor evidence="1">
        <name>Mg(2+)</name>
        <dbReference type="ChEBI" id="CHEBI:18420"/>
    </cofactor>
    <text evidence="1">Binds 1 Mg(2+) ion per subunit.</text>
</comment>
<comment type="pathway">
    <text evidence="1">Carbohydrate metabolism; tricarboxylic acid cycle; succinate from succinyl-CoA (ligase route): step 1/1.</text>
</comment>
<comment type="subunit">
    <text evidence="1">Heterotetramer of two alpha and two beta subunits.</text>
</comment>
<comment type="similarity">
    <text evidence="1">Belongs to the succinate/malate CoA ligase beta subunit family.</text>
</comment>
<reference key="1">
    <citation type="submission" date="2006-12" db="EMBL/GenBank/DDBJ databases">
        <title>Complete sequence of chromosome 1 of Paracoccus denitrificans PD1222.</title>
        <authorList>
            <person name="Copeland A."/>
            <person name="Lucas S."/>
            <person name="Lapidus A."/>
            <person name="Barry K."/>
            <person name="Detter J.C."/>
            <person name="Glavina del Rio T."/>
            <person name="Hammon N."/>
            <person name="Israni S."/>
            <person name="Dalin E."/>
            <person name="Tice H."/>
            <person name="Pitluck S."/>
            <person name="Munk A.C."/>
            <person name="Brettin T."/>
            <person name="Bruce D."/>
            <person name="Han C."/>
            <person name="Tapia R."/>
            <person name="Gilna P."/>
            <person name="Schmutz J."/>
            <person name="Larimer F."/>
            <person name="Land M."/>
            <person name="Hauser L."/>
            <person name="Kyrpides N."/>
            <person name="Lykidis A."/>
            <person name="Spiro S."/>
            <person name="Richardson D.J."/>
            <person name="Moir J.W.B."/>
            <person name="Ferguson S.J."/>
            <person name="van Spanning R.J.M."/>
            <person name="Richardson P."/>
        </authorList>
    </citation>
    <scope>NUCLEOTIDE SEQUENCE [LARGE SCALE GENOMIC DNA]</scope>
    <source>
        <strain>Pd 1222</strain>
    </source>
</reference>
<dbReference type="EC" id="6.2.1.5" evidence="1"/>
<dbReference type="EMBL" id="CP000489">
    <property type="protein sequence ID" value="ABL68671.1"/>
    <property type="molecule type" value="Genomic_DNA"/>
</dbReference>
<dbReference type="RefSeq" id="WP_011746904.1">
    <property type="nucleotide sequence ID" value="NC_008686.1"/>
</dbReference>
<dbReference type="SMR" id="A1AZH7"/>
<dbReference type="STRING" id="318586.Pden_0559"/>
<dbReference type="EnsemblBacteria" id="ABL68671">
    <property type="protein sequence ID" value="ABL68671"/>
    <property type="gene ID" value="Pden_0559"/>
</dbReference>
<dbReference type="GeneID" id="93451784"/>
<dbReference type="KEGG" id="pde:Pden_0559"/>
<dbReference type="eggNOG" id="COG0045">
    <property type="taxonomic scope" value="Bacteria"/>
</dbReference>
<dbReference type="HOGENOM" id="CLU_037430_0_2_5"/>
<dbReference type="OrthoDB" id="9802602at2"/>
<dbReference type="UniPathway" id="UPA00223">
    <property type="reaction ID" value="UER00999"/>
</dbReference>
<dbReference type="Proteomes" id="UP000000361">
    <property type="component" value="Chromosome 1"/>
</dbReference>
<dbReference type="GO" id="GO:0005829">
    <property type="term" value="C:cytosol"/>
    <property type="evidence" value="ECO:0007669"/>
    <property type="project" value="TreeGrafter"/>
</dbReference>
<dbReference type="GO" id="GO:0042709">
    <property type="term" value="C:succinate-CoA ligase complex"/>
    <property type="evidence" value="ECO:0007669"/>
    <property type="project" value="TreeGrafter"/>
</dbReference>
<dbReference type="GO" id="GO:0005524">
    <property type="term" value="F:ATP binding"/>
    <property type="evidence" value="ECO:0007669"/>
    <property type="project" value="UniProtKB-UniRule"/>
</dbReference>
<dbReference type="GO" id="GO:0000287">
    <property type="term" value="F:magnesium ion binding"/>
    <property type="evidence" value="ECO:0007669"/>
    <property type="project" value="UniProtKB-UniRule"/>
</dbReference>
<dbReference type="GO" id="GO:0004775">
    <property type="term" value="F:succinate-CoA ligase (ADP-forming) activity"/>
    <property type="evidence" value="ECO:0007669"/>
    <property type="project" value="UniProtKB-UniRule"/>
</dbReference>
<dbReference type="GO" id="GO:0004776">
    <property type="term" value="F:succinate-CoA ligase (GDP-forming) activity"/>
    <property type="evidence" value="ECO:0007669"/>
    <property type="project" value="RHEA"/>
</dbReference>
<dbReference type="GO" id="GO:0006104">
    <property type="term" value="P:succinyl-CoA metabolic process"/>
    <property type="evidence" value="ECO:0007669"/>
    <property type="project" value="TreeGrafter"/>
</dbReference>
<dbReference type="GO" id="GO:0006099">
    <property type="term" value="P:tricarboxylic acid cycle"/>
    <property type="evidence" value="ECO:0007669"/>
    <property type="project" value="UniProtKB-UniRule"/>
</dbReference>
<dbReference type="FunFam" id="3.30.1490.20:FF:000002">
    <property type="entry name" value="Succinate--CoA ligase [ADP-forming] subunit beta"/>
    <property type="match status" value="1"/>
</dbReference>
<dbReference type="FunFam" id="3.30.470.20:FF:000002">
    <property type="entry name" value="Succinate--CoA ligase [ADP-forming] subunit beta"/>
    <property type="match status" value="1"/>
</dbReference>
<dbReference type="FunFam" id="3.40.50.261:FF:000001">
    <property type="entry name" value="Succinate--CoA ligase [ADP-forming] subunit beta"/>
    <property type="match status" value="1"/>
</dbReference>
<dbReference type="Gene3D" id="3.30.1490.20">
    <property type="entry name" value="ATP-grasp fold, A domain"/>
    <property type="match status" value="1"/>
</dbReference>
<dbReference type="Gene3D" id="3.30.470.20">
    <property type="entry name" value="ATP-grasp fold, B domain"/>
    <property type="match status" value="1"/>
</dbReference>
<dbReference type="Gene3D" id="3.40.50.261">
    <property type="entry name" value="Succinyl-CoA synthetase domains"/>
    <property type="match status" value="1"/>
</dbReference>
<dbReference type="HAMAP" id="MF_00558">
    <property type="entry name" value="Succ_CoA_beta"/>
    <property type="match status" value="1"/>
</dbReference>
<dbReference type="InterPro" id="IPR011761">
    <property type="entry name" value="ATP-grasp"/>
</dbReference>
<dbReference type="InterPro" id="IPR013650">
    <property type="entry name" value="ATP-grasp_succ-CoA_synth-type"/>
</dbReference>
<dbReference type="InterPro" id="IPR013815">
    <property type="entry name" value="ATP_grasp_subdomain_1"/>
</dbReference>
<dbReference type="InterPro" id="IPR017866">
    <property type="entry name" value="Succ-CoA_synthase_bsu_CS"/>
</dbReference>
<dbReference type="InterPro" id="IPR005811">
    <property type="entry name" value="SUCC_ACL_C"/>
</dbReference>
<dbReference type="InterPro" id="IPR005809">
    <property type="entry name" value="Succ_CoA_ligase-like_bsu"/>
</dbReference>
<dbReference type="InterPro" id="IPR016102">
    <property type="entry name" value="Succinyl-CoA_synth-like"/>
</dbReference>
<dbReference type="NCBIfam" id="NF001913">
    <property type="entry name" value="PRK00696.1"/>
    <property type="match status" value="1"/>
</dbReference>
<dbReference type="NCBIfam" id="TIGR01016">
    <property type="entry name" value="sucCoAbeta"/>
    <property type="match status" value="1"/>
</dbReference>
<dbReference type="PANTHER" id="PTHR11815:SF10">
    <property type="entry name" value="SUCCINATE--COA LIGASE [GDP-FORMING] SUBUNIT BETA, MITOCHONDRIAL"/>
    <property type="match status" value="1"/>
</dbReference>
<dbReference type="PANTHER" id="PTHR11815">
    <property type="entry name" value="SUCCINYL-COA SYNTHETASE BETA CHAIN"/>
    <property type="match status" value="1"/>
</dbReference>
<dbReference type="Pfam" id="PF08442">
    <property type="entry name" value="ATP-grasp_2"/>
    <property type="match status" value="1"/>
</dbReference>
<dbReference type="Pfam" id="PF00549">
    <property type="entry name" value="Ligase_CoA"/>
    <property type="match status" value="1"/>
</dbReference>
<dbReference type="PIRSF" id="PIRSF001554">
    <property type="entry name" value="SucCS_beta"/>
    <property type="match status" value="1"/>
</dbReference>
<dbReference type="SUPFAM" id="SSF56059">
    <property type="entry name" value="Glutathione synthetase ATP-binding domain-like"/>
    <property type="match status" value="1"/>
</dbReference>
<dbReference type="SUPFAM" id="SSF52210">
    <property type="entry name" value="Succinyl-CoA synthetase domains"/>
    <property type="match status" value="1"/>
</dbReference>
<dbReference type="PROSITE" id="PS50975">
    <property type="entry name" value="ATP_GRASP"/>
    <property type="match status" value="1"/>
</dbReference>
<dbReference type="PROSITE" id="PS01217">
    <property type="entry name" value="SUCCINYL_COA_LIG_3"/>
    <property type="match status" value="1"/>
</dbReference>
<evidence type="ECO:0000255" key="1">
    <source>
        <dbReference type="HAMAP-Rule" id="MF_00558"/>
    </source>
</evidence>
<feature type="chain" id="PRO_1000082149" description="Succinate--CoA ligase [ADP-forming] subunit beta">
    <location>
        <begin position="1"/>
        <end position="397"/>
    </location>
</feature>
<feature type="domain" description="ATP-grasp" evidence="1">
    <location>
        <begin position="9"/>
        <end position="254"/>
    </location>
</feature>
<feature type="binding site" evidence="1">
    <location>
        <position position="46"/>
    </location>
    <ligand>
        <name>ATP</name>
        <dbReference type="ChEBI" id="CHEBI:30616"/>
    </ligand>
</feature>
<feature type="binding site" evidence="1">
    <location>
        <begin position="53"/>
        <end position="55"/>
    </location>
    <ligand>
        <name>ATP</name>
        <dbReference type="ChEBI" id="CHEBI:30616"/>
    </ligand>
</feature>
<feature type="binding site" evidence="1">
    <location>
        <position position="109"/>
    </location>
    <ligand>
        <name>ATP</name>
        <dbReference type="ChEBI" id="CHEBI:30616"/>
    </ligand>
</feature>
<feature type="binding site" evidence="1">
    <location>
        <position position="112"/>
    </location>
    <ligand>
        <name>ATP</name>
        <dbReference type="ChEBI" id="CHEBI:30616"/>
    </ligand>
</feature>
<feature type="binding site" evidence="1">
    <location>
        <position position="117"/>
    </location>
    <ligand>
        <name>ATP</name>
        <dbReference type="ChEBI" id="CHEBI:30616"/>
    </ligand>
</feature>
<feature type="binding site" evidence="1">
    <location>
        <position position="209"/>
    </location>
    <ligand>
        <name>Mg(2+)</name>
        <dbReference type="ChEBI" id="CHEBI:18420"/>
    </ligand>
</feature>
<feature type="binding site" evidence="1">
    <location>
        <position position="223"/>
    </location>
    <ligand>
        <name>Mg(2+)</name>
        <dbReference type="ChEBI" id="CHEBI:18420"/>
    </ligand>
</feature>
<feature type="binding site" evidence="1">
    <location>
        <position position="274"/>
    </location>
    <ligand>
        <name>substrate</name>
        <note>ligand shared with subunit alpha</note>
    </ligand>
</feature>
<feature type="binding site" evidence="1">
    <location>
        <begin position="331"/>
        <end position="333"/>
    </location>
    <ligand>
        <name>substrate</name>
        <note>ligand shared with subunit alpha</note>
    </ligand>
</feature>
<protein>
    <recommendedName>
        <fullName evidence="1">Succinate--CoA ligase [ADP-forming] subunit beta</fullName>
        <ecNumber evidence="1">6.2.1.5</ecNumber>
    </recommendedName>
    <alternativeName>
        <fullName evidence="1">Succinyl-CoA synthetase subunit beta</fullName>
        <shortName evidence="1">SCS-beta</shortName>
    </alternativeName>
</protein>